<reference key="1">
    <citation type="journal article" date="2001" name="Proc. Natl. Acad. Sci. U.S.A.">
        <title>Complete genomic sequence of Pasteurella multocida Pm70.</title>
        <authorList>
            <person name="May B.J."/>
            <person name="Zhang Q."/>
            <person name="Li L.L."/>
            <person name="Paustian M.L."/>
            <person name="Whittam T.S."/>
            <person name="Kapur V."/>
        </authorList>
    </citation>
    <scope>NUCLEOTIDE SEQUENCE [LARGE SCALE GENOMIC DNA]</scope>
    <source>
        <strain>Pm70</strain>
    </source>
</reference>
<sequence>MKAEALFDLDPGVKVRTRFAPSPTGYLHVGGARTALYSWLYAKHHQGEFVLRIEDTDLERSTPEATAAILEGMAWLNLAWEHGPYFQTKRFDRYNQVIDQMIEQGLAYRCYCSKERLEDLRNTQEQNKQKPRYDRHCLGDHKHSPEQPHVVRFKNPTEGSVVFEDAVRGRIEISNAELDDLIIRRTDGSPTYNFCVVVDDWDMGITHVVRGEDHINNTPRQINILKALGAPIPTYAHVSMILGDDGQKLSKRHGAVSVMQYRDDGYLPEALLNYLVRLGWGHGDQEIFSVEEMIKLFELESVSKSASAFNTEKLLWLNHHYIRELPAEYVAKHLAWHYQDQGIDTSNGPALEDIVKMLAERCKTLKEMAAASRYFFEDFDSFDEAAVKKHFKVAAIEPLEKVKEKLTALDSWDLHSTHQAIEQTAAELELGMGKVGMPLRVAVTGSGQSPSMDVTLVGIGKARTLVRIQKAIDFIKSQNV</sequence>
<dbReference type="EC" id="6.1.1.17" evidence="1"/>
<dbReference type="EMBL" id="AE004439">
    <property type="protein sequence ID" value="AAK03199.1"/>
    <property type="molecule type" value="Genomic_DNA"/>
</dbReference>
<dbReference type="RefSeq" id="WP_010907023.1">
    <property type="nucleotide sequence ID" value="NC_002663.1"/>
</dbReference>
<dbReference type="SMR" id="P57906"/>
<dbReference type="STRING" id="272843.PM1115"/>
<dbReference type="EnsemblBacteria" id="AAK03199">
    <property type="protein sequence ID" value="AAK03199"/>
    <property type="gene ID" value="PM1115"/>
</dbReference>
<dbReference type="KEGG" id="pmu:PM1115"/>
<dbReference type="PATRIC" id="fig|272843.6.peg.1128"/>
<dbReference type="HOGENOM" id="CLU_015768_6_0_6"/>
<dbReference type="OrthoDB" id="9807503at2"/>
<dbReference type="Proteomes" id="UP000000809">
    <property type="component" value="Chromosome"/>
</dbReference>
<dbReference type="GO" id="GO:0005829">
    <property type="term" value="C:cytosol"/>
    <property type="evidence" value="ECO:0007669"/>
    <property type="project" value="TreeGrafter"/>
</dbReference>
<dbReference type="GO" id="GO:0005524">
    <property type="term" value="F:ATP binding"/>
    <property type="evidence" value="ECO:0007669"/>
    <property type="project" value="UniProtKB-UniRule"/>
</dbReference>
<dbReference type="GO" id="GO:0004818">
    <property type="term" value="F:glutamate-tRNA ligase activity"/>
    <property type="evidence" value="ECO:0007669"/>
    <property type="project" value="UniProtKB-UniRule"/>
</dbReference>
<dbReference type="GO" id="GO:0000049">
    <property type="term" value="F:tRNA binding"/>
    <property type="evidence" value="ECO:0007669"/>
    <property type="project" value="InterPro"/>
</dbReference>
<dbReference type="GO" id="GO:0008270">
    <property type="term" value="F:zinc ion binding"/>
    <property type="evidence" value="ECO:0007669"/>
    <property type="project" value="UniProtKB-UniRule"/>
</dbReference>
<dbReference type="GO" id="GO:0006424">
    <property type="term" value="P:glutamyl-tRNA aminoacylation"/>
    <property type="evidence" value="ECO:0007669"/>
    <property type="project" value="UniProtKB-UniRule"/>
</dbReference>
<dbReference type="CDD" id="cd00808">
    <property type="entry name" value="GluRS_core"/>
    <property type="match status" value="1"/>
</dbReference>
<dbReference type="FunFam" id="3.40.50.620:FF:000007">
    <property type="entry name" value="Glutamate--tRNA ligase"/>
    <property type="match status" value="1"/>
</dbReference>
<dbReference type="Gene3D" id="1.10.10.350">
    <property type="match status" value="1"/>
</dbReference>
<dbReference type="Gene3D" id="3.40.50.620">
    <property type="entry name" value="HUPs"/>
    <property type="match status" value="1"/>
</dbReference>
<dbReference type="HAMAP" id="MF_00022">
    <property type="entry name" value="Glu_tRNA_synth_type1"/>
    <property type="match status" value="1"/>
</dbReference>
<dbReference type="InterPro" id="IPR045462">
    <property type="entry name" value="aa-tRNA-synth_I_cd-bd"/>
</dbReference>
<dbReference type="InterPro" id="IPR020751">
    <property type="entry name" value="aa-tRNA-synth_I_codon-bd_sub2"/>
</dbReference>
<dbReference type="InterPro" id="IPR001412">
    <property type="entry name" value="aa-tRNA-synth_I_CS"/>
</dbReference>
<dbReference type="InterPro" id="IPR008925">
    <property type="entry name" value="aa_tRNA-synth_I_cd-bd_sf"/>
</dbReference>
<dbReference type="InterPro" id="IPR004527">
    <property type="entry name" value="Glu-tRNA-ligase_bac/mito"/>
</dbReference>
<dbReference type="InterPro" id="IPR000924">
    <property type="entry name" value="Glu/Gln-tRNA-synth"/>
</dbReference>
<dbReference type="InterPro" id="IPR020058">
    <property type="entry name" value="Glu/Gln-tRNA-synth_Ib_cat-dom"/>
</dbReference>
<dbReference type="InterPro" id="IPR049940">
    <property type="entry name" value="GluQ/Sye"/>
</dbReference>
<dbReference type="InterPro" id="IPR033910">
    <property type="entry name" value="GluRS_core"/>
</dbReference>
<dbReference type="InterPro" id="IPR014729">
    <property type="entry name" value="Rossmann-like_a/b/a_fold"/>
</dbReference>
<dbReference type="NCBIfam" id="TIGR00464">
    <property type="entry name" value="gltX_bact"/>
    <property type="match status" value="1"/>
</dbReference>
<dbReference type="PANTHER" id="PTHR43311">
    <property type="entry name" value="GLUTAMATE--TRNA LIGASE"/>
    <property type="match status" value="1"/>
</dbReference>
<dbReference type="PANTHER" id="PTHR43311:SF2">
    <property type="entry name" value="GLUTAMATE--TRNA LIGASE, MITOCHONDRIAL-RELATED"/>
    <property type="match status" value="1"/>
</dbReference>
<dbReference type="Pfam" id="PF19269">
    <property type="entry name" value="Anticodon_2"/>
    <property type="match status" value="1"/>
</dbReference>
<dbReference type="Pfam" id="PF00749">
    <property type="entry name" value="tRNA-synt_1c"/>
    <property type="match status" value="1"/>
</dbReference>
<dbReference type="PRINTS" id="PR00987">
    <property type="entry name" value="TRNASYNTHGLU"/>
</dbReference>
<dbReference type="SUPFAM" id="SSF48163">
    <property type="entry name" value="An anticodon-binding domain of class I aminoacyl-tRNA synthetases"/>
    <property type="match status" value="1"/>
</dbReference>
<dbReference type="SUPFAM" id="SSF52374">
    <property type="entry name" value="Nucleotidylyl transferase"/>
    <property type="match status" value="1"/>
</dbReference>
<dbReference type="PROSITE" id="PS00178">
    <property type="entry name" value="AA_TRNA_LIGASE_I"/>
    <property type="match status" value="1"/>
</dbReference>
<comment type="function">
    <text evidence="1">Catalyzes the attachment of glutamate to tRNA(Glu) in a two-step reaction: glutamate is first activated by ATP to form Glu-AMP and then transferred to the acceptor end of tRNA(Glu).</text>
</comment>
<comment type="catalytic activity">
    <reaction evidence="1">
        <text>tRNA(Glu) + L-glutamate + ATP = L-glutamyl-tRNA(Glu) + AMP + diphosphate</text>
        <dbReference type="Rhea" id="RHEA:23540"/>
        <dbReference type="Rhea" id="RHEA-COMP:9663"/>
        <dbReference type="Rhea" id="RHEA-COMP:9680"/>
        <dbReference type="ChEBI" id="CHEBI:29985"/>
        <dbReference type="ChEBI" id="CHEBI:30616"/>
        <dbReference type="ChEBI" id="CHEBI:33019"/>
        <dbReference type="ChEBI" id="CHEBI:78442"/>
        <dbReference type="ChEBI" id="CHEBI:78520"/>
        <dbReference type="ChEBI" id="CHEBI:456215"/>
        <dbReference type="EC" id="6.1.1.17"/>
    </reaction>
</comment>
<comment type="subunit">
    <text evidence="1">Monomer.</text>
</comment>
<comment type="subcellular location">
    <subcellularLocation>
        <location evidence="1">Cytoplasm</location>
    </subcellularLocation>
</comment>
<comment type="similarity">
    <text evidence="1">Belongs to the class-I aminoacyl-tRNA synthetase family. Glutamate--tRNA ligase type 1 subfamily.</text>
</comment>
<accession>P57906</accession>
<feature type="chain" id="PRO_0000119619" description="Glutamate--tRNA ligase">
    <location>
        <begin position="1"/>
        <end position="480"/>
    </location>
</feature>
<feature type="region of interest" description="Disordered" evidence="2">
    <location>
        <begin position="122"/>
        <end position="149"/>
    </location>
</feature>
<feature type="short sequence motif" description="'HIGH' region" evidence="1">
    <location>
        <begin position="21"/>
        <end position="31"/>
    </location>
</feature>
<feature type="short sequence motif" description="'KMSKS' region" evidence="1">
    <location>
        <begin position="248"/>
        <end position="252"/>
    </location>
</feature>
<feature type="compositionally biased region" description="Basic and acidic residues" evidence="2">
    <location>
        <begin position="122"/>
        <end position="146"/>
    </location>
</feature>
<feature type="binding site" evidence="1">
    <location>
        <position position="251"/>
    </location>
    <ligand>
        <name>ATP</name>
        <dbReference type="ChEBI" id="CHEBI:30616"/>
    </ligand>
</feature>
<gene>
    <name evidence="1" type="primary">gltX</name>
    <name type="ordered locus">PM1115</name>
</gene>
<organism>
    <name type="scientific">Pasteurella multocida (strain Pm70)</name>
    <dbReference type="NCBI Taxonomy" id="272843"/>
    <lineage>
        <taxon>Bacteria</taxon>
        <taxon>Pseudomonadati</taxon>
        <taxon>Pseudomonadota</taxon>
        <taxon>Gammaproteobacteria</taxon>
        <taxon>Pasteurellales</taxon>
        <taxon>Pasteurellaceae</taxon>
        <taxon>Pasteurella</taxon>
    </lineage>
</organism>
<name>SYE_PASMU</name>
<protein>
    <recommendedName>
        <fullName evidence="1">Glutamate--tRNA ligase</fullName>
        <ecNumber evidence="1">6.1.1.17</ecNumber>
    </recommendedName>
    <alternativeName>
        <fullName evidence="1">Glutamyl-tRNA synthetase</fullName>
        <shortName evidence="1">GluRS</shortName>
    </alternativeName>
</protein>
<evidence type="ECO:0000255" key="1">
    <source>
        <dbReference type="HAMAP-Rule" id="MF_00022"/>
    </source>
</evidence>
<evidence type="ECO:0000256" key="2">
    <source>
        <dbReference type="SAM" id="MobiDB-lite"/>
    </source>
</evidence>
<proteinExistence type="inferred from homology"/>
<keyword id="KW-0030">Aminoacyl-tRNA synthetase</keyword>
<keyword id="KW-0067">ATP-binding</keyword>
<keyword id="KW-0963">Cytoplasm</keyword>
<keyword id="KW-0436">Ligase</keyword>
<keyword id="KW-0547">Nucleotide-binding</keyword>
<keyword id="KW-0648">Protein biosynthesis</keyword>
<keyword id="KW-1185">Reference proteome</keyword>